<evidence type="ECO:0000250" key="1"/>
<evidence type="ECO:0000255" key="2"/>
<evidence type="ECO:0000305" key="3"/>
<sequence>MTTVDASPGISRFEGISSRSVTVATICSGPCSGSRSHSRYHWVPAAAGWTVGVIATLSLIASVSPLIRWLIRVPREFINNYLFNFPDTSIAWSFVLALLAAALTTRKRIAWLLLLGNMVLAAVLNAVDMAANGNTPAETFGENLGFAVHVVAILLLVLSYREFWAKVRRGALFKAAAVLVAGDVIGILLSLGLVELFPGSLARQDRLPYVANRVVGFALADPDLFSGKPHVLLNAIFGLFGALALIMATIVLFQSQRADNALTGEDESAIRGLLELYGKNDSLGYFATRRDKSVIFAHNGRAAITYRVEIGVCLASGDPVGDPGAWPQAVDAWLELCQTYGWAPGVMGASSQGAQVFRRAGFNAIELGDEAILRTAVYKLSGPDMRGVRQAVTRARRAGLTVRIRRHSDISANEMADTIARADAWRDTEFERGFSMALGRLGDPADSDCLLVEAVDRDDHVVAILSLVPWGTTGVSLDVMRRSPQSPNGTIELMVSELALKGETLGIARISLNFTMFRAAFEQGAQLGAGPIARLWRGLLLFFSRWWQLETLYRSNIKYLPDWVPRYACYEDARLIPRVGVASVIAEGFLVLPFSRRGRVHTGHHPAVPARLAESGLLHHDGSTPDVSGLQTADVDLEVANSRIPEQVRVRLAKLKTLQLNGIDAYPVGHPPSHTVAQALDADDEGTVSISGRILRIRDYGGVLFAHVRDWSGEIQVLLDNLVLECCCIADFTAAIDLGDIVEMTGNMGFSKNGTRSLIVRNWRLIGKCLRPLPNKWKGLTDPEARVRTRYVDLAVNTESRNLIMARSCVLRSVREMLFAKGFVEVETPILQQIHGGATARPFATRINTYDMDLFLRIAPELYLKRLCIGGVERVFELGRAFRNEGVDFSHNPEFTLLEAYQAHADYLMWIDGCRELIQNAAEAANGTQTLMRPRIEGASGTANHLEPIDISGVWPVKTVYEAVSEALGECVDTSTELATLRKLSDAAHIPYWPHWDTGAVVLKLYEHLVENRTDQPTFYIDFPTSVSPLTRPHRSKPGVAERWDLVAWGIELGTAYSELTDPVEQRRRLHEQSLLAVGGNPEAMELDEDFLQAMEYAMPPTGGLGMGIDRLVMLITGRSIRETLPFPLAKPH</sequence>
<comment type="function">
    <text evidence="1">Catalyzes the production of L-lysyl-tRNA(Lys)transfer and the transfer of a lysyl group from L-lysyl-tRNA(Lys) to membrane-bound phosphatidylglycerol (PG), which produces lysylphosphatidylglycerol (LPG), one of the components of the bacterial membrane with a positive net charge. LPG synthesis contributes to the resistance to cationic antimicrobial peptides (CAMPs) and likely protects M.tuberculosis against the CAMPs produced by competiting microorganisms (bacteriocins). In fact, the modification of anionic phosphatidylglycerol with positively charged L-lysine results in repulsion of the peptides (By similarity).</text>
</comment>
<comment type="catalytic activity">
    <reaction>
        <text>tRNA(Lys) + L-lysine + ATP = L-lysyl-tRNA(Lys) + AMP + diphosphate</text>
        <dbReference type="Rhea" id="RHEA:20792"/>
        <dbReference type="Rhea" id="RHEA-COMP:9696"/>
        <dbReference type="Rhea" id="RHEA-COMP:9697"/>
        <dbReference type="ChEBI" id="CHEBI:30616"/>
        <dbReference type="ChEBI" id="CHEBI:32551"/>
        <dbReference type="ChEBI" id="CHEBI:33019"/>
        <dbReference type="ChEBI" id="CHEBI:78442"/>
        <dbReference type="ChEBI" id="CHEBI:78529"/>
        <dbReference type="ChEBI" id="CHEBI:456215"/>
        <dbReference type="EC" id="6.1.1.6"/>
    </reaction>
</comment>
<comment type="catalytic activity">
    <reaction>
        <text>L-lysyl-tRNA(Lys) + a 1,2-diacyl-sn-glycero-3-phospho-(1'-sn-glycerol) = a 1,2-diacyl-sn-glycero-3-phospho-1'-(3'-O-L-lysyl)-sn-glycerol + tRNA(Lys)</text>
        <dbReference type="Rhea" id="RHEA:10668"/>
        <dbReference type="Rhea" id="RHEA-COMP:9696"/>
        <dbReference type="Rhea" id="RHEA-COMP:9697"/>
        <dbReference type="ChEBI" id="CHEBI:64716"/>
        <dbReference type="ChEBI" id="CHEBI:75792"/>
        <dbReference type="ChEBI" id="CHEBI:78442"/>
        <dbReference type="ChEBI" id="CHEBI:78529"/>
        <dbReference type="EC" id="2.3.2.3"/>
    </reaction>
</comment>
<comment type="cofactor">
    <cofactor evidence="1">
        <name>Mg(2+)</name>
        <dbReference type="ChEBI" id="CHEBI:18420"/>
    </cofactor>
    <text evidence="1">Binds 3 Mg(2+) ions per subunit.</text>
</comment>
<comment type="subcellular location">
    <subcellularLocation>
        <location evidence="3">Cell membrane</location>
        <topology evidence="3">Multi-pass membrane protein</topology>
    </subcellularLocation>
</comment>
<comment type="similarity">
    <text evidence="3">In the N-terminal section; belongs to the LPG synthetase family.</text>
</comment>
<comment type="similarity">
    <text evidence="3">In the C-terminal section; belongs to the class-II aminoacyl-tRNA synthetase family.</text>
</comment>
<comment type="sequence caution" evidence="3">
    <conflict type="erroneous initiation">
        <sequence resource="EMBL-CDS" id="CAR71488"/>
    </conflict>
    <text>Truncated N-terminus.</text>
</comment>
<feature type="chain" id="PRO_0000394320" description="Lysylphosphatidylglycerol biosynthesis bifunctional protein LysX">
    <location>
        <begin position="1"/>
        <end position="1133"/>
    </location>
</feature>
<feature type="transmembrane region" description="Helical" evidence="2">
    <location>
        <begin position="43"/>
        <end position="63"/>
    </location>
</feature>
<feature type="transmembrane region" description="Helical" evidence="2">
    <location>
        <begin position="82"/>
        <end position="102"/>
    </location>
</feature>
<feature type="transmembrane region" description="Helical" evidence="2">
    <location>
        <begin position="109"/>
        <end position="129"/>
    </location>
</feature>
<feature type="transmembrane region" description="Helical" evidence="2">
    <location>
        <begin position="140"/>
        <end position="160"/>
    </location>
</feature>
<feature type="transmembrane region" description="Helical" evidence="2">
    <location>
        <begin position="177"/>
        <end position="197"/>
    </location>
</feature>
<feature type="transmembrane region" description="Helical" evidence="2">
    <location>
        <begin position="233"/>
        <end position="253"/>
    </location>
</feature>
<feature type="transmembrane region" description="Helical" evidence="2">
    <location>
        <begin position="575"/>
        <end position="595"/>
    </location>
</feature>
<feature type="region of interest" description="Phosphatidylglycerol lysyltransferase">
    <location>
        <begin position="1"/>
        <end position="626"/>
    </location>
</feature>
<feature type="region of interest" description="Lysine--tRNA ligase">
    <location>
        <begin position="627"/>
        <end position="1133"/>
    </location>
</feature>
<feature type="binding site" evidence="1">
    <location>
        <position position="1045"/>
    </location>
    <ligand>
        <name>Mg(2+)</name>
        <dbReference type="ChEBI" id="CHEBI:18420"/>
        <label>1</label>
    </ligand>
</feature>
<feature type="binding site" evidence="1">
    <location>
        <position position="1052"/>
    </location>
    <ligand>
        <name>Mg(2+)</name>
        <dbReference type="ChEBI" id="CHEBI:18420"/>
        <label>1</label>
    </ligand>
</feature>
<feature type="binding site" evidence="1">
    <location>
        <position position="1052"/>
    </location>
    <ligand>
        <name>Mg(2+)</name>
        <dbReference type="ChEBI" id="CHEBI:18420"/>
        <label>2</label>
    </ligand>
</feature>
<organism>
    <name type="scientific">Mycobacterium leprae (strain Br4923)</name>
    <dbReference type="NCBI Taxonomy" id="561304"/>
    <lineage>
        <taxon>Bacteria</taxon>
        <taxon>Bacillati</taxon>
        <taxon>Actinomycetota</taxon>
        <taxon>Actinomycetes</taxon>
        <taxon>Mycobacteriales</taxon>
        <taxon>Mycobacteriaceae</taxon>
        <taxon>Mycobacterium</taxon>
    </lineage>
</organism>
<gene>
    <name type="primary">lysX</name>
    <name type="ordered locus">MLBr01393</name>
</gene>
<keyword id="KW-0030">Aminoacyl-tRNA synthetase</keyword>
<keyword id="KW-0046">Antibiotic resistance</keyword>
<keyword id="KW-0067">ATP-binding</keyword>
<keyword id="KW-1003">Cell membrane</keyword>
<keyword id="KW-0436">Ligase</keyword>
<keyword id="KW-0443">Lipid metabolism</keyword>
<keyword id="KW-0460">Magnesium</keyword>
<keyword id="KW-0472">Membrane</keyword>
<keyword id="KW-0479">Metal-binding</keyword>
<keyword id="KW-0511">Multifunctional enzyme</keyword>
<keyword id="KW-0547">Nucleotide-binding</keyword>
<keyword id="KW-0808">Transferase</keyword>
<keyword id="KW-0812">Transmembrane</keyword>
<keyword id="KW-1133">Transmembrane helix</keyword>
<keyword id="KW-0843">Virulence</keyword>
<name>LYSX_MYCLB</name>
<proteinExistence type="inferred from homology"/>
<reference key="1">
    <citation type="journal article" date="2009" name="Nat. Genet.">
        <title>Comparative genomic and phylogeographic analysis of Mycobacterium leprae.</title>
        <authorList>
            <person name="Monot M."/>
            <person name="Honore N."/>
            <person name="Garnier T."/>
            <person name="Zidane N."/>
            <person name="Sherafi D."/>
            <person name="Paniz-Mondolfi A."/>
            <person name="Matsuoka M."/>
            <person name="Taylor G.M."/>
            <person name="Donoghue H.D."/>
            <person name="Bouwman A."/>
            <person name="Mays S."/>
            <person name="Watson C."/>
            <person name="Lockwood D."/>
            <person name="Khamispour A."/>
            <person name="Dowlati Y."/>
            <person name="Jianping S."/>
            <person name="Rea T.H."/>
            <person name="Vera-Cabrera L."/>
            <person name="Stefani M.M."/>
            <person name="Banu S."/>
            <person name="Macdonald M."/>
            <person name="Sapkota B.R."/>
            <person name="Spencer J.S."/>
            <person name="Thomas J."/>
            <person name="Harshman K."/>
            <person name="Singh P."/>
            <person name="Busso P."/>
            <person name="Gattiker A."/>
            <person name="Rougemont J."/>
            <person name="Brennan P.J."/>
            <person name="Cole S.T."/>
        </authorList>
    </citation>
    <scope>NUCLEOTIDE SEQUENCE [LARGE SCALE GENOMIC DNA]</scope>
    <source>
        <strain>Br4923</strain>
    </source>
</reference>
<dbReference type="EC" id="6.1.1.6"/>
<dbReference type="EC" id="2.3.2.3"/>
<dbReference type="EMBL" id="FM211192">
    <property type="protein sequence ID" value="CAR71488.1"/>
    <property type="status" value="ALT_INIT"/>
    <property type="molecule type" value="Genomic_DNA"/>
</dbReference>
<dbReference type="SMR" id="B8ZRJ4"/>
<dbReference type="KEGG" id="mlb:MLBr01393"/>
<dbReference type="HOGENOM" id="CLU_008255_2_0_11"/>
<dbReference type="Proteomes" id="UP000006900">
    <property type="component" value="Chromosome"/>
</dbReference>
<dbReference type="GO" id="GO:0005829">
    <property type="term" value="C:cytosol"/>
    <property type="evidence" value="ECO:0007669"/>
    <property type="project" value="TreeGrafter"/>
</dbReference>
<dbReference type="GO" id="GO:0005886">
    <property type="term" value="C:plasma membrane"/>
    <property type="evidence" value="ECO:0007669"/>
    <property type="project" value="UniProtKB-SubCell"/>
</dbReference>
<dbReference type="GO" id="GO:0005524">
    <property type="term" value="F:ATP binding"/>
    <property type="evidence" value="ECO:0007669"/>
    <property type="project" value="UniProtKB-UniRule"/>
</dbReference>
<dbReference type="GO" id="GO:0004824">
    <property type="term" value="F:lysine-tRNA ligase activity"/>
    <property type="evidence" value="ECO:0007669"/>
    <property type="project" value="UniProtKB-UniRule"/>
</dbReference>
<dbReference type="GO" id="GO:0000287">
    <property type="term" value="F:magnesium ion binding"/>
    <property type="evidence" value="ECO:0007669"/>
    <property type="project" value="UniProtKB-UniRule"/>
</dbReference>
<dbReference type="GO" id="GO:0050071">
    <property type="term" value="F:phosphatidylglycerol lysyltransferase activity"/>
    <property type="evidence" value="ECO:0007669"/>
    <property type="project" value="UniProtKB-EC"/>
</dbReference>
<dbReference type="GO" id="GO:0000049">
    <property type="term" value="F:tRNA binding"/>
    <property type="evidence" value="ECO:0007669"/>
    <property type="project" value="TreeGrafter"/>
</dbReference>
<dbReference type="GO" id="GO:0006629">
    <property type="term" value="P:lipid metabolic process"/>
    <property type="evidence" value="ECO:0007669"/>
    <property type="project" value="UniProtKB-KW"/>
</dbReference>
<dbReference type="GO" id="GO:0006430">
    <property type="term" value="P:lysyl-tRNA aminoacylation"/>
    <property type="evidence" value="ECO:0007669"/>
    <property type="project" value="UniProtKB-UniRule"/>
</dbReference>
<dbReference type="GO" id="GO:0046677">
    <property type="term" value="P:response to antibiotic"/>
    <property type="evidence" value="ECO:0007669"/>
    <property type="project" value="UniProtKB-KW"/>
</dbReference>
<dbReference type="CDD" id="cd04322">
    <property type="entry name" value="LysRS_N"/>
    <property type="match status" value="1"/>
</dbReference>
<dbReference type="Gene3D" id="3.30.930.10">
    <property type="entry name" value="Bira Bifunctional Protein, Domain 2"/>
    <property type="match status" value="1"/>
</dbReference>
<dbReference type="Gene3D" id="2.40.50.140">
    <property type="entry name" value="Nucleic acid-binding proteins"/>
    <property type="match status" value="1"/>
</dbReference>
<dbReference type="HAMAP" id="MF_00252">
    <property type="entry name" value="Lys_tRNA_synth_class2"/>
    <property type="match status" value="1"/>
</dbReference>
<dbReference type="InterPro" id="IPR004364">
    <property type="entry name" value="Aa-tRNA-synt_II"/>
</dbReference>
<dbReference type="InterPro" id="IPR006195">
    <property type="entry name" value="aa-tRNA-synth_II"/>
</dbReference>
<dbReference type="InterPro" id="IPR045864">
    <property type="entry name" value="aa-tRNA-synth_II/BPL/LPL"/>
</dbReference>
<dbReference type="InterPro" id="IPR024320">
    <property type="entry name" value="LPG_synthase_C"/>
</dbReference>
<dbReference type="InterPro" id="IPR002313">
    <property type="entry name" value="Lys-tRNA-ligase_II"/>
</dbReference>
<dbReference type="InterPro" id="IPR044136">
    <property type="entry name" value="Lys-tRNA-ligase_II_N"/>
</dbReference>
<dbReference type="InterPro" id="IPR018149">
    <property type="entry name" value="Lys-tRNA-synth_II_C"/>
</dbReference>
<dbReference type="InterPro" id="IPR012340">
    <property type="entry name" value="NA-bd_OB-fold"/>
</dbReference>
<dbReference type="InterPro" id="IPR004365">
    <property type="entry name" value="NA-bd_OB_tRNA"/>
</dbReference>
<dbReference type="InterPro" id="IPR031553">
    <property type="entry name" value="tRNA-synt_2_TM"/>
</dbReference>
<dbReference type="NCBIfam" id="TIGR00499">
    <property type="entry name" value="lysS_bact"/>
    <property type="match status" value="1"/>
</dbReference>
<dbReference type="NCBIfam" id="NF001756">
    <property type="entry name" value="PRK00484.1"/>
    <property type="match status" value="1"/>
</dbReference>
<dbReference type="NCBIfam" id="NF002821">
    <property type="entry name" value="PRK02983.1"/>
    <property type="match status" value="1"/>
</dbReference>
<dbReference type="PANTHER" id="PTHR42918:SF15">
    <property type="entry name" value="LYSINE--TRNA LIGASE, CHLOROPLASTIC_MITOCHONDRIAL"/>
    <property type="match status" value="1"/>
</dbReference>
<dbReference type="PANTHER" id="PTHR42918">
    <property type="entry name" value="LYSYL-TRNA SYNTHETASE"/>
    <property type="match status" value="1"/>
</dbReference>
<dbReference type="Pfam" id="PF09924">
    <property type="entry name" value="LPG_synthase_C"/>
    <property type="match status" value="1"/>
</dbReference>
<dbReference type="Pfam" id="PF00152">
    <property type="entry name" value="tRNA-synt_2"/>
    <property type="match status" value="1"/>
</dbReference>
<dbReference type="Pfam" id="PF16995">
    <property type="entry name" value="tRNA-synt_2_TM"/>
    <property type="match status" value="1"/>
</dbReference>
<dbReference type="Pfam" id="PF01336">
    <property type="entry name" value="tRNA_anti-codon"/>
    <property type="match status" value="1"/>
</dbReference>
<dbReference type="PRINTS" id="PR00982">
    <property type="entry name" value="TRNASYNTHLYS"/>
</dbReference>
<dbReference type="SUPFAM" id="SSF55681">
    <property type="entry name" value="Class II aaRS and biotin synthetases"/>
    <property type="match status" value="1"/>
</dbReference>
<dbReference type="SUPFAM" id="SSF50249">
    <property type="entry name" value="Nucleic acid-binding proteins"/>
    <property type="match status" value="1"/>
</dbReference>
<dbReference type="PROSITE" id="PS50862">
    <property type="entry name" value="AA_TRNA_LIGASE_II"/>
    <property type="match status" value="1"/>
</dbReference>
<protein>
    <recommendedName>
        <fullName>Lysylphosphatidylglycerol biosynthesis bifunctional protein LysX</fullName>
    </recommendedName>
    <domain>
        <recommendedName>
            <fullName>Lysine--tRNA ligase</fullName>
            <ecNumber>6.1.1.6</ecNumber>
        </recommendedName>
        <alternativeName>
            <fullName>Lysyl-tRNA synthetase</fullName>
            <shortName>LysRS</shortName>
        </alternativeName>
    </domain>
    <domain>
        <recommendedName>
            <fullName>Phosphatidylglycerol lysyltransferase</fullName>
            <ecNumber>2.3.2.3</ecNumber>
        </recommendedName>
        <alternativeName>
            <fullName>Lysylphosphatidylglycerol synthetase</fullName>
            <shortName>LPG synthetase</shortName>
        </alternativeName>
    </domain>
</protein>
<accession>B8ZRJ4</accession>